<organism>
    <name type="scientific">Dioscorea elephantipes</name>
    <name type="common">Elephant's foot yam</name>
    <name type="synonym">Testudinaria elephantipes</name>
    <dbReference type="NCBI Taxonomy" id="145284"/>
    <lineage>
        <taxon>Eukaryota</taxon>
        <taxon>Viridiplantae</taxon>
        <taxon>Streptophyta</taxon>
        <taxon>Embryophyta</taxon>
        <taxon>Tracheophyta</taxon>
        <taxon>Spermatophyta</taxon>
        <taxon>Magnoliopsida</taxon>
        <taxon>Liliopsida</taxon>
        <taxon>Dioscoreales</taxon>
        <taxon>Dioscoreaceae</taxon>
        <taxon>Dioscorea</taxon>
    </lineage>
</organism>
<evidence type="ECO:0000255" key="1">
    <source>
        <dbReference type="HAMAP-Rule" id="MF_00437"/>
    </source>
</evidence>
<gene>
    <name evidence="1" type="primary">ycf4</name>
</gene>
<protein>
    <recommendedName>
        <fullName evidence="1">Photosystem I assembly protein Ycf4</fullName>
    </recommendedName>
</protein>
<dbReference type="EMBL" id="EF380353">
    <property type="protein sequence ID" value="ABR01441.1"/>
    <property type="molecule type" value="Genomic_DNA"/>
</dbReference>
<dbReference type="RefSeq" id="YP_001294363.1">
    <property type="nucleotide sequence ID" value="NC_009601.1"/>
</dbReference>
<dbReference type="GeneID" id="5236674"/>
<dbReference type="GO" id="GO:0009535">
    <property type="term" value="C:chloroplast thylakoid membrane"/>
    <property type="evidence" value="ECO:0007669"/>
    <property type="project" value="UniProtKB-SubCell"/>
</dbReference>
<dbReference type="GO" id="GO:0009522">
    <property type="term" value="C:photosystem I"/>
    <property type="evidence" value="ECO:0007669"/>
    <property type="project" value="InterPro"/>
</dbReference>
<dbReference type="GO" id="GO:0015979">
    <property type="term" value="P:photosynthesis"/>
    <property type="evidence" value="ECO:0007669"/>
    <property type="project" value="UniProtKB-UniRule"/>
</dbReference>
<dbReference type="HAMAP" id="MF_00437">
    <property type="entry name" value="Ycf4"/>
    <property type="match status" value="1"/>
</dbReference>
<dbReference type="InterPro" id="IPR003359">
    <property type="entry name" value="PSI_Ycf4_assembly"/>
</dbReference>
<dbReference type="PANTHER" id="PTHR33288">
    <property type="match status" value="1"/>
</dbReference>
<dbReference type="PANTHER" id="PTHR33288:SF4">
    <property type="entry name" value="PHOTOSYSTEM I ASSEMBLY PROTEIN YCF4"/>
    <property type="match status" value="1"/>
</dbReference>
<dbReference type="Pfam" id="PF02392">
    <property type="entry name" value="Ycf4"/>
    <property type="match status" value="1"/>
</dbReference>
<accession>A6MML8</accession>
<keyword id="KW-0150">Chloroplast</keyword>
<keyword id="KW-0472">Membrane</keyword>
<keyword id="KW-0602">Photosynthesis</keyword>
<keyword id="KW-0934">Plastid</keyword>
<keyword id="KW-0793">Thylakoid</keyword>
<keyword id="KW-0812">Transmembrane</keyword>
<keyword id="KW-1133">Transmembrane helix</keyword>
<reference key="1">
    <citation type="journal article" date="2007" name="Mol. Phylogenet. Evol.">
        <title>Phylogenetic and evolutionary implications of complete chloroplast genome sequences of four early-diverging angiosperms: Buxus (Buxaceae), Chloranthus (Chloranthaceae), Dioscorea (Dioscoreaceae), and Illicium (Schisandraceae).</title>
        <authorList>
            <person name="Hansen D.R."/>
            <person name="Dastidar S.G."/>
            <person name="Cai Z."/>
            <person name="Penaflor C."/>
            <person name="Kuehl J.V."/>
            <person name="Boore J.L."/>
            <person name="Jansen R.K."/>
        </authorList>
    </citation>
    <scope>NUCLEOTIDE SEQUENCE [LARGE SCALE GENOMIC DNA]</scope>
</reference>
<name>YCF4_DIOEL</name>
<proteinExistence type="inferred from homology"/>
<feature type="chain" id="PRO_0000326008" description="Photosystem I assembly protein Ycf4">
    <location>
        <begin position="1"/>
        <end position="186"/>
    </location>
</feature>
<feature type="transmembrane region" description="Helical" evidence="1">
    <location>
        <begin position="22"/>
        <end position="42"/>
    </location>
</feature>
<feature type="transmembrane region" description="Helical" evidence="1">
    <location>
        <begin position="57"/>
        <end position="77"/>
    </location>
</feature>
<geneLocation type="chloroplast"/>
<comment type="function">
    <text evidence="1">Seems to be required for the assembly of the photosystem I complex.</text>
</comment>
<comment type="subcellular location">
    <subcellularLocation>
        <location evidence="1">Plastid</location>
        <location evidence="1">Chloroplast thylakoid membrane</location>
        <topology evidence="1">Multi-pass membrane protein</topology>
    </subcellularLocation>
</comment>
<comment type="similarity">
    <text evidence="1">Belongs to the Ycf4 family.</text>
</comment>
<sequence length="186" mass="21672">MNWRSEHIWIELITGSRKTSNFCWACILFLGSLGFLVVGTSSYLGRNLISVFPSQQIIFFPQGIVMSFYGIAGLFISSYLWCTISWNVGSGYDRFDRKEGIVCIFRWGFPGINRRIFLRFLMRDIQSIRMQVKEGLYPRRVLYMEIRGQGAIPLTRTDENFTPREIEQKAAELAYFLRVPIEGKRN</sequence>